<comment type="function">
    <text evidence="1">Catalyzes the GTP-dependent ribosomal translocation step during translation elongation. During this step, the ribosome changes from the pre-translocational (PRE) to the post-translocational (POST) state as the newly formed A-site-bound peptidyl-tRNA and P-site-bound deacylated tRNA move to the P and E sites, respectively. Catalyzes the coordinated movement of the two tRNA molecules, the mRNA and conformational changes in the ribosome.</text>
</comment>
<comment type="subcellular location">
    <subcellularLocation>
        <location evidence="1">Cytoplasm</location>
    </subcellularLocation>
</comment>
<comment type="similarity">
    <text evidence="1">Belongs to the TRAFAC class translation factor GTPase superfamily. Classic translation factor GTPase family. EF-G/EF-2 subfamily.</text>
</comment>
<sequence length="693" mass="76611">MAREFSLAKTRNIGIMAHVDAGKTTTTERILYYTGKIHKIGETHEGASQMDWMEQEQERGITITSAATTAQWNGHRVNIIDTPGHVDFTIEVQRSLRVLDGAVTVLDSQSGVEPQTETVWRQATEYGVPRIVFANKMDKIGADFLYSVSTLHDRLQANAHPIQLPIGAEDDFRGIIDLIKMKAEIYTNDLGTDILEEDIPAEYVDQANEYREKLIEAVAETDEDLMMKYLEGEEITNDELKAAIRRATINVEFFPVLCGSAFKNKGVQLMLDAVIDYLPSPLDIPAIKGINPDTGEEETRPASDEAPFAALAFKIMTDPFVGRLTFIRVYSGILQSGSYVMNTSKGKRERIGRILQMHANSRQEIEQVYAGDIAAAIGLKDTTTGDSLTDEKAKVILESIEVPEPVIQLMVEPKTKADQDKMAIGLQKLAEEDPTFRVETNPETGETVISGMGELHLDVLVDRLKREHKVEANVGAPQVSYRETFRAATQARGFFKRQSGGKGQFGDVWIEFTPNEEGKGFEFENAIVGGVVPREFIPAVEKGLEESMANGVLAGYPMVDIKAKLYDGSYHDVDSSETAFKIAASLALKEAAKTAQPTILEPMMLVTITVPEENLGDVMGHVTARRGRVDGMEAHGNTQIVRAYVPLAEMFGYATTLRSATQGRGTFMMVFDHYEDVPKSVQEEIIKKNSGEA</sequence>
<dbReference type="EMBL" id="CP000024">
    <property type="protein sequence ID" value="AAV63306.1"/>
    <property type="molecule type" value="Genomic_DNA"/>
</dbReference>
<dbReference type="RefSeq" id="WP_011226574.1">
    <property type="nucleotide sequence ID" value="NC_006449.1"/>
</dbReference>
<dbReference type="SMR" id="Q5LY21"/>
<dbReference type="GeneID" id="66899519"/>
<dbReference type="KEGG" id="stc:str1789"/>
<dbReference type="HOGENOM" id="CLU_002794_4_1_9"/>
<dbReference type="GO" id="GO:0005737">
    <property type="term" value="C:cytoplasm"/>
    <property type="evidence" value="ECO:0007669"/>
    <property type="project" value="UniProtKB-SubCell"/>
</dbReference>
<dbReference type="GO" id="GO:0005525">
    <property type="term" value="F:GTP binding"/>
    <property type="evidence" value="ECO:0007669"/>
    <property type="project" value="UniProtKB-UniRule"/>
</dbReference>
<dbReference type="GO" id="GO:0003924">
    <property type="term" value="F:GTPase activity"/>
    <property type="evidence" value="ECO:0007669"/>
    <property type="project" value="InterPro"/>
</dbReference>
<dbReference type="GO" id="GO:0003746">
    <property type="term" value="F:translation elongation factor activity"/>
    <property type="evidence" value="ECO:0007669"/>
    <property type="project" value="UniProtKB-UniRule"/>
</dbReference>
<dbReference type="GO" id="GO:0032790">
    <property type="term" value="P:ribosome disassembly"/>
    <property type="evidence" value="ECO:0007669"/>
    <property type="project" value="TreeGrafter"/>
</dbReference>
<dbReference type="CDD" id="cd01886">
    <property type="entry name" value="EF-G"/>
    <property type="match status" value="1"/>
</dbReference>
<dbReference type="CDD" id="cd16262">
    <property type="entry name" value="EFG_III"/>
    <property type="match status" value="1"/>
</dbReference>
<dbReference type="CDD" id="cd01434">
    <property type="entry name" value="EFG_mtEFG1_IV"/>
    <property type="match status" value="1"/>
</dbReference>
<dbReference type="CDD" id="cd03713">
    <property type="entry name" value="EFG_mtEFG_C"/>
    <property type="match status" value="1"/>
</dbReference>
<dbReference type="CDD" id="cd04088">
    <property type="entry name" value="EFG_mtEFG_II"/>
    <property type="match status" value="1"/>
</dbReference>
<dbReference type="FunFam" id="2.40.30.10:FF:000006">
    <property type="entry name" value="Elongation factor G"/>
    <property type="match status" value="1"/>
</dbReference>
<dbReference type="FunFam" id="3.30.230.10:FF:000003">
    <property type="entry name" value="Elongation factor G"/>
    <property type="match status" value="1"/>
</dbReference>
<dbReference type="FunFam" id="3.30.70.240:FF:000001">
    <property type="entry name" value="Elongation factor G"/>
    <property type="match status" value="1"/>
</dbReference>
<dbReference type="FunFam" id="3.30.70.870:FF:000001">
    <property type="entry name" value="Elongation factor G"/>
    <property type="match status" value="1"/>
</dbReference>
<dbReference type="FunFam" id="3.40.50.300:FF:000029">
    <property type="entry name" value="Elongation factor G"/>
    <property type="match status" value="1"/>
</dbReference>
<dbReference type="Gene3D" id="3.30.230.10">
    <property type="match status" value="1"/>
</dbReference>
<dbReference type="Gene3D" id="3.30.70.240">
    <property type="match status" value="1"/>
</dbReference>
<dbReference type="Gene3D" id="3.30.70.870">
    <property type="entry name" value="Elongation Factor G (Translational Gtpase), domain 3"/>
    <property type="match status" value="1"/>
</dbReference>
<dbReference type="Gene3D" id="3.40.50.300">
    <property type="entry name" value="P-loop containing nucleotide triphosphate hydrolases"/>
    <property type="match status" value="1"/>
</dbReference>
<dbReference type="Gene3D" id="2.40.30.10">
    <property type="entry name" value="Translation factors"/>
    <property type="match status" value="1"/>
</dbReference>
<dbReference type="HAMAP" id="MF_00054_B">
    <property type="entry name" value="EF_G_EF_2_B"/>
    <property type="match status" value="1"/>
</dbReference>
<dbReference type="InterPro" id="IPR041095">
    <property type="entry name" value="EFG_II"/>
</dbReference>
<dbReference type="InterPro" id="IPR009022">
    <property type="entry name" value="EFG_III"/>
</dbReference>
<dbReference type="InterPro" id="IPR035647">
    <property type="entry name" value="EFG_III/V"/>
</dbReference>
<dbReference type="InterPro" id="IPR047872">
    <property type="entry name" value="EFG_IV"/>
</dbReference>
<dbReference type="InterPro" id="IPR035649">
    <property type="entry name" value="EFG_V"/>
</dbReference>
<dbReference type="InterPro" id="IPR000640">
    <property type="entry name" value="EFG_V-like"/>
</dbReference>
<dbReference type="InterPro" id="IPR004161">
    <property type="entry name" value="EFTu-like_2"/>
</dbReference>
<dbReference type="InterPro" id="IPR031157">
    <property type="entry name" value="G_TR_CS"/>
</dbReference>
<dbReference type="InterPro" id="IPR027417">
    <property type="entry name" value="P-loop_NTPase"/>
</dbReference>
<dbReference type="InterPro" id="IPR020568">
    <property type="entry name" value="Ribosomal_Su5_D2-typ_SF"/>
</dbReference>
<dbReference type="InterPro" id="IPR014721">
    <property type="entry name" value="Ribsml_uS5_D2-typ_fold_subgr"/>
</dbReference>
<dbReference type="InterPro" id="IPR005225">
    <property type="entry name" value="Small_GTP-bd"/>
</dbReference>
<dbReference type="InterPro" id="IPR000795">
    <property type="entry name" value="T_Tr_GTP-bd_dom"/>
</dbReference>
<dbReference type="InterPro" id="IPR009000">
    <property type="entry name" value="Transl_B-barrel_sf"/>
</dbReference>
<dbReference type="InterPro" id="IPR004540">
    <property type="entry name" value="Transl_elong_EFG/EF2"/>
</dbReference>
<dbReference type="InterPro" id="IPR005517">
    <property type="entry name" value="Transl_elong_EFG/EF2_IV"/>
</dbReference>
<dbReference type="NCBIfam" id="TIGR00484">
    <property type="entry name" value="EF-G"/>
    <property type="match status" value="1"/>
</dbReference>
<dbReference type="NCBIfam" id="NF009379">
    <property type="entry name" value="PRK12740.1-3"/>
    <property type="match status" value="1"/>
</dbReference>
<dbReference type="NCBIfam" id="NF009381">
    <property type="entry name" value="PRK12740.1-5"/>
    <property type="match status" value="1"/>
</dbReference>
<dbReference type="NCBIfam" id="TIGR00231">
    <property type="entry name" value="small_GTP"/>
    <property type="match status" value="1"/>
</dbReference>
<dbReference type="PANTHER" id="PTHR43261:SF1">
    <property type="entry name" value="RIBOSOME-RELEASING FACTOR 2, MITOCHONDRIAL"/>
    <property type="match status" value="1"/>
</dbReference>
<dbReference type="PANTHER" id="PTHR43261">
    <property type="entry name" value="TRANSLATION ELONGATION FACTOR G-RELATED"/>
    <property type="match status" value="1"/>
</dbReference>
<dbReference type="Pfam" id="PF00679">
    <property type="entry name" value="EFG_C"/>
    <property type="match status" value="1"/>
</dbReference>
<dbReference type="Pfam" id="PF14492">
    <property type="entry name" value="EFG_III"/>
    <property type="match status" value="1"/>
</dbReference>
<dbReference type="Pfam" id="PF03764">
    <property type="entry name" value="EFG_IV"/>
    <property type="match status" value="1"/>
</dbReference>
<dbReference type="Pfam" id="PF00009">
    <property type="entry name" value="GTP_EFTU"/>
    <property type="match status" value="1"/>
</dbReference>
<dbReference type="Pfam" id="PF03144">
    <property type="entry name" value="GTP_EFTU_D2"/>
    <property type="match status" value="1"/>
</dbReference>
<dbReference type="PRINTS" id="PR00315">
    <property type="entry name" value="ELONGATNFCT"/>
</dbReference>
<dbReference type="SMART" id="SM00838">
    <property type="entry name" value="EFG_C"/>
    <property type="match status" value="1"/>
</dbReference>
<dbReference type="SMART" id="SM00889">
    <property type="entry name" value="EFG_IV"/>
    <property type="match status" value="1"/>
</dbReference>
<dbReference type="SUPFAM" id="SSF54980">
    <property type="entry name" value="EF-G C-terminal domain-like"/>
    <property type="match status" value="2"/>
</dbReference>
<dbReference type="SUPFAM" id="SSF52540">
    <property type="entry name" value="P-loop containing nucleoside triphosphate hydrolases"/>
    <property type="match status" value="1"/>
</dbReference>
<dbReference type="SUPFAM" id="SSF54211">
    <property type="entry name" value="Ribosomal protein S5 domain 2-like"/>
    <property type="match status" value="1"/>
</dbReference>
<dbReference type="SUPFAM" id="SSF50447">
    <property type="entry name" value="Translation proteins"/>
    <property type="match status" value="1"/>
</dbReference>
<dbReference type="PROSITE" id="PS00301">
    <property type="entry name" value="G_TR_1"/>
    <property type="match status" value="1"/>
</dbReference>
<dbReference type="PROSITE" id="PS51722">
    <property type="entry name" value="G_TR_2"/>
    <property type="match status" value="1"/>
</dbReference>
<name>EFG_STRT1</name>
<protein>
    <recommendedName>
        <fullName evidence="1">Elongation factor G</fullName>
        <shortName evidence="1">EF-G</shortName>
    </recommendedName>
</protein>
<proteinExistence type="inferred from homology"/>
<feature type="chain" id="PRO_0000091237" description="Elongation factor G">
    <location>
        <begin position="1"/>
        <end position="693"/>
    </location>
</feature>
<feature type="domain" description="tr-type G">
    <location>
        <begin position="8"/>
        <end position="282"/>
    </location>
</feature>
<feature type="binding site" evidence="1">
    <location>
        <begin position="17"/>
        <end position="24"/>
    </location>
    <ligand>
        <name>GTP</name>
        <dbReference type="ChEBI" id="CHEBI:37565"/>
    </ligand>
</feature>
<feature type="binding site" evidence="1">
    <location>
        <begin position="81"/>
        <end position="85"/>
    </location>
    <ligand>
        <name>GTP</name>
        <dbReference type="ChEBI" id="CHEBI:37565"/>
    </ligand>
</feature>
<feature type="binding site" evidence="1">
    <location>
        <begin position="135"/>
        <end position="138"/>
    </location>
    <ligand>
        <name>GTP</name>
        <dbReference type="ChEBI" id="CHEBI:37565"/>
    </ligand>
</feature>
<gene>
    <name evidence="1" type="primary">fusA</name>
    <name type="ordered locus">str1789</name>
</gene>
<keyword id="KW-0963">Cytoplasm</keyword>
<keyword id="KW-0251">Elongation factor</keyword>
<keyword id="KW-0342">GTP-binding</keyword>
<keyword id="KW-0547">Nucleotide-binding</keyword>
<keyword id="KW-0648">Protein biosynthesis</keyword>
<reference key="1">
    <citation type="journal article" date="2004" name="Nat. Biotechnol.">
        <title>Complete sequence and comparative genome analysis of the dairy bacterium Streptococcus thermophilus.</title>
        <authorList>
            <person name="Bolotin A."/>
            <person name="Quinquis B."/>
            <person name="Renault P."/>
            <person name="Sorokin A."/>
            <person name="Ehrlich S.D."/>
            <person name="Kulakauskas S."/>
            <person name="Lapidus A."/>
            <person name="Goltsman E."/>
            <person name="Mazur M."/>
            <person name="Pusch G.D."/>
            <person name="Fonstein M."/>
            <person name="Overbeek R."/>
            <person name="Kyprides N."/>
            <person name="Purnelle B."/>
            <person name="Prozzi D."/>
            <person name="Ngui K."/>
            <person name="Masuy D."/>
            <person name="Hancy F."/>
            <person name="Burteau S."/>
            <person name="Boutry M."/>
            <person name="Delcour J."/>
            <person name="Goffeau A."/>
            <person name="Hols P."/>
        </authorList>
    </citation>
    <scope>NUCLEOTIDE SEQUENCE [LARGE SCALE GENOMIC DNA]</scope>
    <source>
        <strain>CNRZ 1066</strain>
    </source>
</reference>
<organism>
    <name type="scientific">Streptococcus thermophilus (strain CNRZ 1066)</name>
    <dbReference type="NCBI Taxonomy" id="299768"/>
    <lineage>
        <taxon>Bacteria</taxon>
        <taxon>Bacillati</taxon>
        <taxon>Bacillota</taxon>
        <taxon>Bacilli</taxon>
        <taxon>Lactobacillales</taxon>
        <taxon>Streptococcaceae</taxon>
        <taxon>Streptococcus</taxon>
    </lineage>
</organism>
<evidence type="ECO:0000255" key="1">
    <source>
        <dbReference type="HAMAP-Rule" id="MF_00054"/>
    </source>
</evidence>
<accession>Q5LY21</accession>